<organism>
    <name type="scientific">Bacillus cereus (strain 03BB102)</name>
    <dbReference type="NCBI Taxonomy" id="572264"/>
    <lineage>
        <taxon>Bacteria</taxon>
        <taxon>Bacillati</taxon>
        <taxon>Bacillota</taxon>
        <taxon>Bacilli</taxon>
        <taxon>Bacillales</taxon>
        <taxon>Bacillaceae</taxon>
        <taxon>Bacillus</taxon>
        <taxon>Bacillus cereus group</taxon>
    </lineage>
</organism>
<dbReference type="EC" id="3.5.1.-" evidence="1"/>
<dbReference type="EMBL" id="CP001407">
    <property type="protein sequence ID" value="ACO26735.1"/>
    <property type="molecule type" value="Genomic_DNA"/>
</dbReference>
<dbReference type="SMR" id="C1EZI8"/>
<dbReference type="KEGG" id="bcx:BCA_5336"/>
<dbReference type="Proteomes" id="UP000002210">
    <property type="component" value="Chromosome"/>
</dbReference>
<dbReference type="GO" id="GO:0019213">
    <property type="term" value="F:deacetylase activity"/>
    <property type="evidence" value="ECO:0007669"/>
    <property type="project" value="TreeGrafter"/>
</dbReference>
<dbReference type="GO" id="GO:0016811">
    <property type="term" value="F:hydrolase activity, acting on carbon-nitrogen (but not peptide) bonds, in linear amides"/>
    <property type="evidence" value="ECO:0007669"/>
    <property type="project" value="UniProtKB-UniRule"/>
</dbReference>
<dbReference type="GO" id="GO:0046872">
    <property type="term" value="F:metal ion binding"/>
    <property type="evidence" value="ECO:0007669"/>
    <property type="project" value="UniProtKB-KW"/>
</dbReference>
<dbReference type="GO" id="GO:0000272">
    <property type="term" value="P:polysaccharide catabolic process"/>
    <property type="evidence" value="ECO:0007669"/>
    <property type="project" value="InterPro"/>
</dbReference>
<dbReference type="CDD" id="cd10803">
    <property type="entry name" value="YdjC_EF3048_like"/>
    <property type="match status" value="1"/>
</dbReference>
<dbReference type="FunFam" id="3.20.20.370:FF:000011">
    <property type="entry name" value="Carbohydrate deacetylase"/>
    <property type="match status" value="1"/>
</dbReference>
<dbReference type="Gene3D" id="3.20.20.370">
    <property type="entry name" value="Glycoside hydrolase/deacetylase"/>
    <property type="match status" value="1"/>
</dbReference>
<dbReference type="HAMAP" id="MF_01246">
    <property type="entry name" value="COD"/>
    <property type="match status" value="1"/>
</dbReference>
<dbReference type="InterPro" id="IPR022948">
    <property type="entry name" value="COD_ChbG_bac"/>
</dbReference>
<dbReference type="InterPro" id="IPR011330">
    <property type="entry name" value="Glyco_hydro/deAcase_b/a-brl"/>
</dbReference>
<dbReference type="InterPro" id="IPR006879">
    <property type="entry name" value="YdjC-like"/>
</dbReference>
<dbReference type="NCBIfam" id="NF002559">
    <property type="entry name" value="PRK02134.1"/>
    <property type="match status" value="1"/>
</dbReference>
<dbReference type="PANTHER" id="PTHR31609:SF1">
    <property type="entry name" value="CARBOHYDRATE DEACETYLASE"/>
    <property type="match status" value="1"/>
</dbReference>
<dbReference type="PANTHER" id="PTHR31609">
    <property type="entry name" value="YDJC DEACETYLASE FAMILY MEMBER"/>
    <property type="match status" value="1"/>
</dbReference>
<dbReference type="Pfam" id="PF04794">
    <property type="entry name" value="YdjC"/>
    <property type="match status" value="1"/>
</dbReference>
<dbReference type="SUPFAM" id="SSF88713">
    <property type="entry name" value="Glycoside hydrolase/deacetylase"/>
    <property type="match status" value="1"/>
</dbReference>
<sequence length="235" mass="26633">MMIKLIVNADDFGLTEGTNYGIIDGHINGLVNSTTMMMNMPGTEHAVRLAKEYKTLGVGVHLVLTAGKPLLGDVPSLVSSDGLFHKQSVVWEGKVNPEEVEREWTAQIEKFLSYGLKPTHLDSHHHVHGLPILHDVLERLAATYNVPIRRCEEERAVRPFSDLFYSDFYADGVTEDYFVKLKERVQGEQTVEIMVHPAYIDPELVKRSSYVMDRVKELRILTESELPEGIELVKF</sequence>
<accession>C1EZI8</accession>
<reference key="1">
    <citation type="submission" date="2009-02" db="EMBL/GenBank/DDBJ databases">
        <title>Genome sequence of Bacillus cereus 03BB102.</title>
        <authorList>
            <person name="Dodson R.J."/>
            <person name="Jackson P."/>
            <person name="Munk A.C."/>
            <person name="Brettin T."/>
            <person name="Bruce D."/>
            <person name="Detter C."/>
            <person name="Tapia R."/>
            <person name="Han C."/>
            <person name="Sutton G."/>
            <person name="Sims D."/>
        </authorList>
    </citation>
    <scope>NUCLEOTIDE SEQUENCE [LARGE SCALE GENOMIC DNA]</scope>
    <source>
        <strain>03BB102</strain>
    </source>
</reference>
<name>YDJC_BACC3</name>
<feature type="chain" id="PRO_1000165043" description="Carbohydrate deacetylase">
    <location>
        <begin position="1"/>
        <end position="235"/>
    </location>
</feature>
<feature type="binding site" evidence="1">
    <location>
        <position position="61"/>
    </location>
    <ligand>
        <name>Mg(2+)</name>
        <dbReference type="ChEBI" id="CHEBI:18420"/>
    </ligand>
</feature>
<feature type="binding site" evidence="1">
    <location>
        <position position="124"/>
    </location>
    <ligand>
        <name>Mg(2+)</name>
        <dbReference type="ChEBI" id="CHEBI:18420"/>
    </ligand>
</feature>
<protein>
    <recommendedName>
        <fullName evidence="1">Carbohydrate deacetylase</fullName>
        <ecNumber evidence="1">3.5.1.-</ecNumber>
    </recommendedName>
</protein>
<keyword id="KW-0119">Carbohydrate metabolism</keyword>
<keyword id="KW-0378">Hydrolase</keyword>
<keyword id="KW-0460">Magnesium</keyword>
<keyword id="KW-0479">Metal-binding</keyword>
<evidence type="ECO:0000255" key="1">
    <source>
        <dbReference type="HAMAP-Rule" id="MF_01246"/>
    </source>
</evidence>
<proteinExistence type="inferred from homology"/>
<gene>
    <name type="ordered locus">BCA_5336</name>
</gene>
<comment type="function">
    <text evidence="1">Probably catalyzes the deacetylation of acetylated carbohydrates an important step in the degradation of oligosaccharides.</text>
</comment>
<comment type="cofactor">
    <cofactor evidence="1">
        <name>Mg(2+)</name>
        <dbReference type="ChEBI" id="CHEBI:18420"/>
    </cofactor>
</comment>
<comment type="similarity">
    <text evidence="1">Belongs to the YdjC deacetylase family.</text>
</comment>